<protein>
    <recommendedName>
        <fullName evidence="2">Large ribosomal subunit protein bL27</fullName>
    </recommendedName>
    <alternativeName>
        <fullName evidence="4">50S ribosomal protein L27</fullName>
    </alternativeName>
</protein>
<dbReference type="EMBL" id="AM946015">
    <property type="protein sequence ID" value="CAR41651.1"/>
    <property type="molecule type" value="Genomic_DNA"/>
</dbReference>
<dbReference type="RefSeq" id="WP_012658244.1">
    <property type="nucleotide sequence ID" value="NC_012004.1"/>
</dbReference>
<dbReference type="SMR" id="B9DU56"/>
<dbReference type="STRING" id="218495.SUB0727"/>
<dbReference type="GeneID" id="93826011"/>
<dbReference type="KEGG" id="sub:SUB0727"/>
<dbReference type="eggNOG" id="COG0211">
    <property type="taxonomic scope" value="Bacteria"/>
</dbReference>
<dbReference type="HOGENOM" id="CLU_095424_4_0_9"/>
<dbReference type="OrthoDB" id="9803474at2"/>
<dbReference type="Proteomes" id="UP000000449">
    <property type="component" value="Chromosome"/>
</dbReference>
<dbReference type="GO" id="GO:0022625">
    <property type="term" value="C:cytosolic large ribosomal subunit"/>
    <property type="evidence" value="ECO:0007669"/>
    <property type="project" value="TreeGrafter"/>
</dbReference>
<dbReference type="GO" id="GO:0003735">
    <property type="term" value="F:structural constituent of ribosome"/>
    <property type="evidence" value="ECO:0007669"/>
    <property type="project" value="InterPro"/>
</dbReference>
<dbReference type="GO" id="GO:0006412">
    <property type="term" value="P:translation"/>
    <property type="evidence" value="ECO:0007669"/>
    <property type="project" value="UniProtKB-UniRule"/>
</dbReference>
<dbReference type="FunFam" id="2.40.50.100:FF:000004">
    <property type="entry name" value="50S ribosomal protein L27"/>
    <property type="match status" value="1"/>
</dbReference>
<dbReference type="Gene3D" id="2.40.50.100">
    <property type="match status" value="1"/>
</dbReference>
<dbReference type="HAMAP" id="MF_00539">
    <property type="entry name" value="Ribosomal_bL27"/>
    <property type="match status" value="1"/>
</dbReference>
<dbReference type="InterPro" id="IPR001684">
    <property type="entry name" value="Ribosomal_bL27"/>
</dbReference>
<dbReference type="InterPro" id="IPR018261">
    <property type="entry name" value="Ribosomal_bL27_CS"/>
</dbReference>
<dbReference type="NCBIfam" id="TIGR00062">
    <property type="entry name" value="L27"/>
    <property type="match status" value="1"/>
</dbReference>
<dbReference type="PANTHER" id="PTHR15893:SF0">
    <property type="entry name" value="LARGE RIBOSOMAL SUBUNIT PROTEIN BL27M"/>
    <property type="match status" value="1"/>
</dbReference>
<dbReference type="PANTHER" id="PTHR15893">
    <property type="entry name" value="RIBOSOMAL PROTEIN L27"/>
    <property type="match status" value="1"/>
</dbReference>
<dbReference type="Pfam" id="PF01016">
    <property type="entry name" value="Ribosomal_L27"/>
    <property type="match status" value="1"/>
</dbReference>
<dbReference type="PRINTS" id="PR00063">
    <property type="entry name" value="RIBOSOMALL27"/>
</dbReference>
<dbReference type="SUPFAM" id="SSF110324">
    <property type="entry name" value="Ribosomal L27 protein-like"/>
    <property type="match status" value="1"/>
</dbReference>
<dbReference type="PROSITE" id="PS00831">
    <property type="entry name" value="RIBOSOMAL_L27"/>
    <property type="match status" value="1"/>
</dbReference>
<comment type="PTM">
    <text evidence="1">The N-terminus is cleaved by ribosomal processing cysteine protease Prp.</text>
</comment>
<comment type="similarity">
    <text evidence="2">Belongs to the bacterial ribosomal protein bL27 family.</text>
</comment>
<proteinExistence type="inferred from homology"/>
<gene>
    <name evidence="2" type="primary">rpmA</name>
    <name type="ordered locus">SUB0727</name>
</gene>
<feature type="propeptide" id="PRO_0000459971" evidence="1">
    <location>
        <begin position="1"/>
        <end position="12"/>
    </location>
</feature>
<feature type="chain" id="PRO_1000195893" description="Large ribosomal subunit protein bL27">
    <location>
        <begin position="13"/>
        <end position="97"/>
    </location>
</feature>
<feature type="region of interest" description="Disordered" evidence="3">
    <location>
        <begin position="14"/>
        <end position="37"/>
    </location>
</feature>
<keyword id="KW-1185">Reference proteome</keyword>
<keyword id="KW-0687">Ribonucleoprotein</keyword>
<keyword id="KW-0689">Ribosomal protein</keyword>
<reference key="1">
    <citation type="journal article" date="2009" name="BMC Genomics">
        <title>Evidence for niche adaptation in the genome of the bovine pathogen Streptococcus uberis.</title>
        <authorList>
            <person name="Ward P.N."/>
            <person name="Holden M.T.G."/>
            <person name="Leigh J.A."/>
            <person name="Lennard N."/>
            <person name="Bignell A."/>
            <person name="Barron A."/>
            <person name="Clark L."/>
            <person name="Quail M.A."/>
            <person name="Woodward J."/>
            <person name="Barrell B.G."/>
            <person name="Egan S.A."/>
            <person name="Field T.R."/>
            <person name="Maskell D."/>
            <person name="Kehoe M."/>
            <person name="Dowson C.G."/>
            <person name="Chanter N."/>
            <person name="Whatmore A.M."/>
            <person name="Bentley S.D."/>
            <person name="Parkhill J."/>
        </authorList>
    </citation>
    <scope>NUCLEOTIDE SEQUENCE [LARGE SCALE GENOMIC DNA]</scope>
    <source>
        <strain>ATCC BAA-854 / 0140J</strain>
    </source>
</reference>
<sequence length="97" mass="10430">MLKMNLANLQLFAHKKGGGSTSNGRDSQAKRLGAKAADGQTVTGGSILFRQRGTHIYPGVNVGRGGDDTLFAKVEGVVRFERKGRDKRQVSVYPVAK</sequence>
<name>RL27_STRU0</name>
<organism>
    <name type="scientific">Streptococcus uberis (strain ATCC BAA-854 / 0140J)</name>
    <dbReference type="NCBI Taxonomy" id="218495"/>
    <lineage>
        <taxon>Bacteria</taxon>
        <taxon>Bacillati</taxon>
        <taxon>Bacillota</taxon>
        <taxon>Bacilli</taxon>
        <taxon>Lactobacillales</taxon>
        <taxon>Streptococcaceae</taxon>
        <taxon>Streptococcus</taxon>
    </lineage>
</organism>
<accession>B9DU56</accession>
<evidence type="ECO:0000250" key="1">
    <source>
        <dbReference type="UniProtKB" id="Q2FXT0"/>
    </source>
</evidence>
<evidence type="ECO:0000255" key="2">
    <source>
        <dbReference type="HAMAP-Rule" id="MF_00539"/>
    </source>
</evidence>
<evidence type="ECO:0000256" key="3">
    <source>
        <dbReference type="SAM" id="MobiDB-lite"/>
    </source>
</evidence>
<evidence type="ECO:0000305" key="4"/>